<accession>B8N7S7</accession>
<protein>
    <recommendedName>
        <fullName>Probable endo-1,3(4)-beta-glucanase AFLA_105200</fullName>
        <ecNumber>3.2.1.6</ecNumber>
    </recommendedName>
    <alternativeName>
        <fullName>Mixed-linked glucanase AFLA_105200</fullName>
    </alternativeName>
</protein>
<evidence type="ECO:0000250" key="1"/>
<evidence type="ECO:0000255" key="2"/>
<evidence type="ECO:0000255" key="3">
    <source>
        <dbReference type="PROSITE-ProRule" id="PRU01098"/>
    </source>
</evidence>
<evidence type="ECO:0000256" key="4">
    <source>
        <dbReference type="SAM" id="MobiDB-lite"/>
    </source>
</evidence>
<evidence type="ECO:0000305" key="5"/>
<organism>
    <name type="scientific">Aspergillus flavus (strain ATCC 200026 / FGSC A1120 / IAM 13836 / NRRL 3357 / JCM 12722 / SRRC 167)</name>
    <dbReference type="NCBI Taxonomy" id="332952"/>
    <lineage>
        <taxon>Eukaryota</taxon>
        <taxon>Fungi</taxon>
        <taxon>Dikarya</taxon>
        <taxon>Ascomycota</taxon>
        <taxon>Pezizomycotina</taxon>
        <taxon>Eurotiomycetes</taxon>
        <taxon>Eurotiomycetidae</taxon>
        <taxon>Eurotiales</taxon>
        <taxon>Aspergillaceae</taxon>
        <taxon>Aspergillus</taxon>
        <taxon>Aspergillus subgen. Circumdati</taxon>
    </lineage>
</organism>
<reference key="1">
    <citation type="journal article" date="2015" name="Genome Announc.">
        <title>Genome sequence of Aspergillus flavus NRRL 3357, a strain that causes aflatoxin contamination of food and feed.</title>
        <authorList>
            <person name="Nierman W.C."/>
            <person name="Yu J."/>
            <person name="Fedorova-Abrams N.D."/>
            <person name="Losada L."/>
            <person name="Cleveland T.E."/>
            <person name="Bhatnagar D."/>
            <person name="Bennett J.W."/>
            <person name="Dean R."/>
            <person name="Payne G.A."/>
        </authorList>
    </citation>
    <scope>NUCLEOTIDE SEQUENCE [LARGE SCALE GENOMIC DNA]</scope>
    <source>
        <strain>ATCC 200026 / FGSC A1120 / IAM 13836 / NRRL 3357 / JCM 12722 / SRRC 167</strain>
    </source>
</reference>
<sequence>MSSSSFVWTVGSIALSSLITPTIADGSGSRYQLTEAWQGEKFLDHFKFFSGSDPTNGFVTYANQSYAESSGLIEVTESGSFYMGVDYKTKLSPNGPGRDSVRIESKEYYDEGLYIIDLQHMPGSVCGTWPAFWSVGPNWPYDGEIDIIEGVNKHEANEIVLHTSGSCSLSSENDMSGTMSSSECGESSGTIGCVVKGQTGTSGAPFNEKNGGVYAMEWTSSFVKIWYFARSEIPQSITEGNPDTTAFGTPMAHLQGTCDFGERFKSQKFILDTTFCGDWAGGVFGDSGCPVSDPSNPIQSCVNYVAENPAAFKEAYWEINYIKLFQTGTGHSTASIASQAETATAVVSKTVDSVPSVTSTPILETTAPAPETVSAEAPATSSAVPEPANPQTSVAGAETTAAPAPSPETTAAPASPSSDDSEGADAVSETTIYVTETTTICGASTQKGTIQTIGGGETEVSPASSTVESAATPAAPTPTSQEPVASLPGTTVNDGTPVPTDVSPETPAEETAGESGAPTPSAEQPEKPQPAATSIETGIVPPPVSNPAPTEQGTPEGASPVDATESRHVPDEPAPTSAAPIRSPSPSSWTISSSSRVALSSSFASTTSSASRTTSATKEATAPTETDSGASTGTNPESPVFTAGASKSVGISGLAGIVCGIAMAMLA</sequence>
<name>EGLX_ASPFN</name>
<comment type="function">
    <text evidence="1">Mixed-linked glucanase involved in the degradation of complex natural cellulosic substrates.</text>
</comment>
<comment type="catalytic activity">
    <reaction>
        <text>Endohydrolysis of (1-&gt;3)- or (1-&gt;4)-linkages in beta-D-glucans when the glucose residue whose reducing group is involved in the linkage to be hydrolyzed is itself substituted at C-3.</text>
        <dbReference type="EC" id="3.2.1.6"/>
    </reaction>
</comment>
<comment type="subcellular location">
    <subcellularLocation>
        <location evidence="1">Cell membrane</location>
        <topology evidence="1">Lipid-anchor</topology>
        <topology evidence="1">GPI-anchor</topology>
    </subcellularLocation>
</comment>
<comment type="similarity">
    <text evidence="5">Belongs to the glycosyl hydrolase 16 family.</text>
</comment>
<keyword id="KW-0119">Carbohydrate metabolism</keyword>
<keyword id="KW-1003">Cell membrane</keyword>
<keyword id="KW-0136">Cellulose degradation</keyword>
<keyword id="KW-0325">Glycoprotein</keyword>
<keyword id="KW-0326">Glycosidase</keyword>
<keyword id="KW-0336">GPI-anchor</keyword>
<keyword id="KW-0378">Hydrolase</keyword>
<keyword id="KW-0449">Lipoprotein</keyword>
<keyword id="KW-0472">Membrane</keyword>
<keyword id="KW-0624">Polysaccharide degradation</keyword>
<keyword id="KW-0732">Signal</keyword>
<proteinExistence type="inferred from homology"/>
<dbReference type="EC" id="3.2.1.6"/>
<dbReference type="EMBL" id="EQ963475">
    <property type="protein sequence ID" value="EED53146.1"/>
    <property type="molecule type" value="Genomic_DNA"/>
</dbReference>
<dbReference type="RefSeq" id="XP_002376392.1">
    <property type="nucleotide sequence ID" value="XM_002376351.1"/>
</dbReference>
<dbReference type="SMR" id="B8N7S7"/>
<dbReference type="EnsemblFungi" id="EED53146">
    <property type="protein sequence ID" value="EED53146"/>
    <property type="gene ID" value="AFLA_105200"/>
</dbReference>
<dbReference type="VEuPathDB" id="FungiDB:AFLA_006449"/>
<dbReference type="eggNOG" id="ENOG502QUM3">
    <property type="taxonomic scope" value="Eukaryota"/>
</dbReference>
<dbReference type="HOGENOM" id="CLU_016972_4_0_1"/>
<dbReference type="OMA" id="FYMGVDY"/>
<dbReference type="GO" id="GO:0005886">
    <property type="term" value="C:plasma membrane"/>
    <property type="evidence" value="ECO:0007669"/>
    <property type="project" value="UniProtKB-SubCell"/>
</dbReference>
<dbReference type="GO" id="GO:0098552">
    <property type="term" value="C:side of membrane"/>
    <property type="evidence" value="ECO:0007669"/>
    <property type="project" value="UniProtKB-KW"/>
</dbReference>
<dbReference type="GO" id="GO:0052861">
    <property type="term" value="F:endo-1,3(4)-beta-glucanase activity"/>
    <property type="evidence" value="ECO:0007669"/>
    <property type="project" value="UniProtKB-EC"/>
</dbReference>
<dbReference type="GO" id="GO:0030245">
    <property type="term" value="P:cellulose catabolic process"/>
    <property type="evidence" value="ECO:0007669"/>
    <property type="project" value="UniProtKB-KW"/>
</dbReference>
<dbReference type="CDD" id="cd02181">
    <property type="entry name" value="GH16_fungal_Lam16A_glucanase"/>
    <property type="match status" value="1"/>
</dbReference>
<dbReference type="FunFam" id="2.60.120.200:FF:000114">
    <property type="entry name" value="Probable endo-1,3(4)-beta-glucanase NFIA_089530"/>
    <property type="match status" value="1"/>
</dbReference>
<dbReference type="Gene3D" id="2.60.120.200">
    <property type="match status" value="1"/>
</dbReference>
<dbReference type="InterPro" id="IPR013320">
    <property type="entry name" value="ConA-like_dom_sf"/>
</dbReference>
<dbReference type="InterPro" id="IPR000757">
    <property type="entry name" value="GH16"/>
</dbReference>
<dbReference type="InterPro" id="IPR050546">
    <property type="entry name" value="Glycosyl_Hydrlase_16"/>
</dbReference>
<dbReference type="PANTHER" id="PTHR10963:SF58">
    <property type="entry name" value="ENDO-1,3(4)-BETA-GLUCANASE XGEA"/>
    <property type="match status" value="1"/>
</dbReference>
<dbReference type="PANTHER" id="PTHR10963">
    <property type="entry name" value="GLYCOSYL HYDROLASE-RELATED"/>
    <property type="match status" value="1"/>
</dbReference>
<dbReference type="SUPFAM" id="SSF49899">
    <property type="entry name" value="Concanavalin A-like lectins/glucanases"/>
    <property type="match status" value="1"/>
</dbReference>
<dbReference type="PROSITE" id="PS51762">
    <property type="entry name" value="GH16_2"/>
    <property type="match status" value="1"/>
</dbReference>
<feature type="signal peptide" evidence="2">
    <location>
        <begin position="1"/>
        <end position="24"/>
    </location>
</feature>
<feature type="chain" id="PRO_0000395086" description="Probable endo-1,3(4)-beta-glucanase AFLA_105200">
    <location>
        <begin position="25"/>
        <end position="644"/>
    </location>
</feature>
<feature type="propeptide" id="PRO_0000395087" description="Removed in mature form" evidence="2">
    <location>
        <begin position="645"/>
        <end position="667"/>
    </location>
</feature>
<feature type="domain" description="GH16" evidence="3">
    <location>
        <begin position="25"/>
        <end position="288"/>
    </location>
</feature>
<feature type="region of interest" description="Disordered" evidence="4">
    <location>
        <begin position="354"/>
        <end position="427"/>
    </location>
</feature>
<feature type="region of interest" description="Disordered" evidence="4">
    <location>
        <begin position="448"/>
        <end position="646"/>
    </location>
</feature>
<feature type="compositionally biased region" description="Polar residues" evidence="4">
    <location>
        <begin position="354"/>
        <end position="363"/>
    </location>
</feature>
<feature type="compositionally biased region" description="Polar residues" evidence="4">
    <location>
        <begin position="379"/>
        <end position="394"/>
    </location>
</feature>
<feature type="compositionally biased region" description="Low complexity" evidence="4">
    <location>
        <begin position="395"/>
        <end position="427"/>
    </location>
</feature>
<feature type="compositionally biased region" description="Low complexity" evidence="4">
    <location>
        <begin position="448"/>
        <end position="483"/>
    </location>
</feature>
<feature type="compositionally biased region" description="Low complexity" evidence="4">
    <location>
        <begin position="574"/>
        <end position="622"/>
    </location>
</feature>
<feature type="compositionally biased region" description="Polar residues" evidence="4">
    <location>
        <begin position="623"/>
        <end position="637"/>
    </location>
</feature>
<feature type="active site" description="Nucleophile" evidence="1">
    <location>
        <position position="144"/>
    </location>
</feature>
<feature type="active site" description="Proton donor" evidence="1">
    <location>
        <position position="149"/>
    </location>
</feature>
<feature type="lipid moiety-binding region" description="GPI-anchor amidated glycine" evidence="2">
    <location>
        <position position="644"/>
    </location>
</feature>
<feature type="glycosylation site" description="N-linked (GlcNAc...) asparagine" evidence="2">
    <location>
        <position position="63"/>
    </location>
</feature>
<gene>
    <name type="ORF">AFLA_105200</name>
</gene>